<name>RL159_PLAVT</name>
<feature type="signal peptide" evidence="1">
    <location>
        <begin position="1"/>
        <end position="21"/>
    </location>
</feature>
<feature type="chain" id="PRO_0000447980" description="Secreted RxLR effector protein 159">
    <location>
        <begin position="22"/>
        <end position="111"/>
    </location>
</feature>
<feature type="short sequence motif" description="RxLR-dEER" evidence="6">
    <location>
        <begin position="50"/>
        <end position="71"/>
    </location>
</feature>
<feature type="glycosylation site" description="N-linked (GlcNAc...) asparagine" evidence="2">
    <location>
        <position position="81"/>
    </location>
</feature>
<reference key="1">
    <citation type="journal article" date="2018" name="Front. Plant Sci.">
        <title>In planta functional analysis and subcellular localization of the oomycete pathogen Plasmopara viticola candidate RXLR effector repertoire.</title>
        <authorList>
            <person name="Liu Y."/>
            <person name="Lan X."/>
            <person name="Song S."/>
            <person name="Yin L."/>
            <person name="Dry I.B."/>
            <person name="Qu J."/>
            <person name="Xiang J."/>
            <person name="Lu J."/>
        </authorList>
    </citation>
    <scope>NUCLEOTIDE SEQUENCE [MRNA]</scope>
    <scope>DOMAIN</scope>
    <scope>FUNCTION</scope>
    <scope>SUBCELLULAR LOCATION</scope>
</reference>
<accession>P0CV70</accession>
<keyword id="KW-0325">Glycoprotein</keyword>
<keyword id="KW-1035">Host cytoplasm</keyword>
<keyword id="KW-1048">Host nucleus</keyword>
<keyword id="KW-0964">Secreted</keyword>
<keyword id="KW-0732">Signal</keyword>
<keyword id="KW-0843">Virulence</keyword>
<dbReference type="SMR" id="P0CV70"/>
<dbReference type="GlyCosmos" id="P0CV70">
    <property type="glycosylation" value="1 site, No reported glycans"/>
</dbReference>
<dbReference type="GO" id="GO:0005576">
    <property type="term" value="C:extracellular region"/>
    <property type="evidence" value="ECO:0007669"/>
    <property type="project" value="UniProtKB-SubCell"/>
</dbReference>
<dbReference type="GO" id="GO:0030430">
    <property type="term" value="C:host cell cytoplasm"/>
    <property type="evidence" value="ECO:0007669"/>
    <property type="project" value="UniProtKB-SubCell"/>
</dbReference>
<dbReference type="GO" id="GO:0042025">
    <property type="term" value="C:host cell nucleus"/>
    <property type="evidence" value="ECO:0007669"/>
    <property type="project" value="UniProtKB-SubCell"/>
</dbReference>
<gene>
    <name evidence="4" type="primary">RXLR159</name>
</gene>
<organism>
    <name type="scientific">Plasmopara viticola</name>
    <name type="common">Downy mildew of grapevine</name>
    <name type="synonym">Botrytis viticola</name>
    <dbReference type="NCBI Taxonomy" id="143451"/>
    <lineage>
        <taxon>Eukaryota</taxon>
        <taxon>Sar</taxon>
        <taxon>Stramenopiles</taxon>
        <taxon>Oomycota</taxon>
        <taxon>Peronosporales</taxon>
        <taxon>Peronosporaceae</taxon>
        <taxon>Plasmopara</taxon>
    </lineage>
</organism>
<protein>
    <recommendedName>
        <fullName evidence="4">Secreted RxLR effector protein 159</fullName>
    </recommendedName>
</protein>
<sequence length="111" mass="12254">MRGAYYVAIAFLVAASSRTAAEFDQAEPQPAINNDILTSGGTVNEMLPKRVLRGSRDLKDKLAVYANDEQRTFDLFPNENNFSKALNPTITKTANVMRADRDDVMAKAAEQ</sequence>
<proteinExistence type="inferred from homology"/>
<comment type="function">
    <text evidence="3">Secreted effector that completely suppresses the host cell death induced by cell death-inducing proteins.</text>
</comment>
<comment type="subcellular location">
    <subcellularLocation>
        <location evidence="3">Secreted</location>
    </subcellularLocation>
    <subcellularLocation>
        <location evidence="3">Host nucleus</location>
    </subcellularLocation>
    <subcellularLocation>
        <location evidence="3">Host cytoplasm</location>
    </subcellularLocation>
</comment>
<comment type="domain">
    <text evidence="6">The RxLR-dEER motif acts to carry the protein into the host cell cytoplasm through binding to cell surface phosphatidylinositol-3-phosphate.</text>
</comment>
<comment type="similarity">
    <text evidence="5">Belongs to the RxLR effector family.</text>
</comment>
<evidence type="ECO:0000255" key="1"/>
<evidence type="ECO:0000255" key="2">
    <source>
        <dbReference type="PROSITE-ProRule" id="PRU00498"/>
    </source>
</evidence>
<evidence type="ECO:0000269" key="3">
    <source>
    </source>
</evidence>
<evidence type="ECO:0000303" key="4">
    <source>
    </source>
</evidence>
<evidence type="ECO:0000305" key="5"/>
<evidence type="ECO:0000305" key="6">
    <source>
    </source>
</evidence>